<evidence type="ECO:0000255" key="1">
    <source>
        <dbReference type="HAMAP-Rule" id="MF_01369"/>
    </source>
</evidence>
<evidence type="ECO:0000305" key="2"/>
<protein>
    <recommendedName>
        <fullName evidence="1">Large ribosomal subunit protein uL23</fullName>
    </recommendedName>
    <alternativeName>
        <fullName evidence="2">50S ribosomal protein L23</fullName>
    </alternativeName>
</protein>
<keyword id="KW-0687">Ribonucleoprotein</keyword>
<keyword id="KW-0689">Ribosomal protein</keyword>
<keyword id="KW-0694">RNA-binding</keyword>
<keyword id="KW-0699">rRNA-binding</keyword>
<sequence length="101" mass="11110">MSTIADPRDILLAPVISEKSYGLIEEGTYTFLVHPDSNKTQIKIAVEKIFGVTVTSVNTANRQGKRKRTRFGYGKRKDTKRALVTLSADSKPIEIFGGPVA</sequence>
<comment type="function">
    <text evidence="1">One of the early assembly proteins it binds 23S rRNA. One of the proteins that surrounds the polypeptide exit tunnel on the outside of the ribosome. Forms the main docking site for trigger factor binding to the ribosome.</text>
</comment>
<comment type="subunit">
    <text evidence="1">Part of the 50S ribosomal subunit. Contacts protein L29, and trigger factor when it is bound to the ribosome.</text>
</comment>
<comment type="similarity">
    <text evidence="1">Belongs to the universal ribosomal protein uL23 family.</text>
</comment>
<feature type="chain" id="PRO_1000068147" description="Large ribosomal subunit protein uL23">
    <location>
        <begin position="1"/>
        <end position="101"/>
    </location>
</feature>
<dbReference type="EMBL" id="CP000431">
    <property type="protein sequence ID" value="ABG97912.1"/>
    <property type="molecule type" value="Genomic_DNA"/>
</dbReference>
<dbReference type="RefSeq" id="WP_005239632.1">
    <property type="nucleotide sequence ID" value="NC_008268.1"/>
</dbReference>
<dbReference type="SMR" id="Q0S3H4"/>
<dbReference type="GeneID" id="69890518"/>
<dbReference type="KEGG" id="rha:RHA1_ro06135"/>
<dbReference type="eggNOG" id="COG0089">
    <property type="taxonomic scope" value="Bacteria"/>
</dbReference>
<dbReference type="HOGENOM" id="CLU_037562_3_2_11"/>
<dbReference type="OrthoDB" id="9793353at2"/>
<dbReference type="Proteomes" id="UP000008710">
    <property type="component" value="Chromosome"/>
</dbReference>
<dbReference type="GO" id="GO:1990904">
    <property type="term" value="C:ribonucleoprotein complex"/>
    <property type="evidence" value="ECO:0007669"/>
    <property type="project" value="UniProtKB-KW"/>
</dbReference>
<dbReference type="GO" id="GO:0005840">
    <property type="term" value="C:ribosome"/>
    <property type="evidence" value="ECO:0007669"/>
    <property type="project" value="UniProtKB-KW"/>
</dbReference>
<dbReference type="GO" id="GO:0019843">
    <property type="term" value="F:rRNA binding"/>
    <property type="evidence" value="ECO:0007669"/>
    <property type="project" value="UniProtKB-UniRule"/>
</dbReference>
<dbReference type="GO" id="GO:0003735">
    <property type="term" value="F:structural constituent of ribosome"/>
    <property type="evidence" value="ECO:0007669"/>
    <property type="project" value="InterPro"/>
</dbReference>
<dbReference type="GO" id="GO:0006412">
    <property type="term" value="P:translation"/>
    <property type="evidence" value="ECO:0007669"/>
    <property type="project" value="UniProtKB-UniRule"/>
</dbReference>
<dbReference type="FunFam" id="3.30.70.330:FF:000001">
    <property type="entry name" value="50S ribosomal protein L23"/>
    <property type="match status" value="1"/>
</dbReference>
<dbReference type="Gene3D" id="3.30.70.330">
    <property type="match status" value="1"/>
</dbReference>
<dbReference type="HAMAP" id="MF_01369_B">
    <property type="entry name" value="Ribosomal_uL23_B"/>
    <property type="match status" value="1"/>
</dbReference>
<dbReference type="InterPro" id="IPR012677">
    <property type="entry name" value="Nucleotide-bd_a/b_plait_sf"/>
</dbReference>
<dbReference type="InterPro" id="IPR013025">
    <property type="entry name" value="Ribosomal_uL23-like"/>
</dbReference>
<dbReference type="InterPro" id="IPR012678">
    <property type="entry name" value="Ribosomal_uL23/eL15/eS24_sf"/>
</dbReference>
<dbReference type="NCBIfam" id="NF004363">
    <property type="entry name" value="PRK05738.2-4"/>
    <property type="match status" value="1"/>
</dbReference>
<dbReference type="NCBIfam" id="NF004364">
    <property type="entry name" value="PRK05738.2-5"/>
    <property type="match status" value="1"/>
</dbReference>
<dbReference type="PANTHER" id="PTHR11620">
    <property type="entry name" value="60S RIBOSOMAL PROTEIN L23A"/>
    <property type="match status" value="1"/>
</dbReference>
<dbReference type="Pfam" id="PF00276">
    <property type="entry name" value="Ribosomal_L23"/>
    <property type="match status" value="1"/>
</dbReference>
<dbReference type="SUPFAM" id="SSF54189">
    <property type="entry name" value="Ribosomal proteins S24e, L23 and L15e"/>
    <property type="match status" value="1"/>
</dbReference>
<reference key="1">
    <citation type="journal article" date="2006" name="Proc. Natl. Acad. Sci. U.S.A.">
        <title>The complete genome of Rhodococcus sp. RHA1 provides insights into a catabolic powerhouse.</title>
        <authorList>
            <person name="McLeod M.P."/>
            <person name="Warren R.L."/>
            <person name="Hsiao W.W.L."/>
            <person name="Araki N."/>
            <person name="Myhre M."/>
            <person name="Fernandes C."/>
            <person name="Miyazawa D."/>
            <person name="Wong W."/>
            <person name="Lillquist A.L."/>
            <person name="Wang D."/>
            <person name="Dosanjh M."/>
            <person name="Hara H."/>
            <person name="Petrescu A."/>
            <person name="Morin R.D."/>
            <person name="Yang G."/>
            <person name="Stott J.M."/>
            <person name="Schein J.E."/>
            <person name="Shin H."/>
            <person name="Smailus D."/>
            <person name="Siddiqui A.S."/>
            <person name="Marra M.A."/>
            <person name="Jones S.J.M."/>
            <person name="Holt R."/>
            <person name="Brinkman F.S.L."/>
            <person name="Miyauchi K."/>
            <person name="Fukuda M."/>
            <person name="Davies J.E."/>
            <person name="Mohn W.W."/>
            <person name="Eltis L.D."/>
        </authorList>
    </citation>
    <scope>NUCLEOTIDE SEQUENCE [LARGE SCALE GENOMIC DNA]</scope>
    <source>
        <strain>RHA1</strain>
    </source>
</reference>
<organism>
    <name type="scientific">Rhodococcus jostii (strain RHA1)</name>
    <dbReference type="NCBI Taxonomy" id="101510"/>
    <lineage>
        <taxon>Bacteria</taxon>
        <taxon>Bacillati</taxon>
        <taxon>Actinomycetota</taxon>
        <taxon>Actinomycetes</taxon>
        <taxon>Mycobacteriales</taxon>
        <taxon>Nocardiaceae</taxon>
        <taxon>Rhodococcus</taxon>
    </lineage>
</organism>
<gene>
    <name evidence="1" type="primary">rplW</name>
    <name type="ordered locus">RHA1_ro06135</name>
</gene>
<proteinExistence type="inferred from homology"/>
<accession>Q0S3H4</accession>
<name>RL23_RHOJR</name>